<protein>
    <recommendedName>
        <fullName evidence="10">Monoacylglycerol lipase ABHD2</fullName>
        <ecNumber evidence="1">3.1.1.23</ecNumber>
    </recommendedName>
    <alternativeName>
        <fullName evidence="10">2-arachidonoylglycerol hydrolase</fullName>
    </alternativeName>
    <alternativeName>
        <fullName evidence="10">Abhydrolase domain-containing protein 2</fullName>
    </alternativeName>
    <alternativeName>
        <fullName evidence="1">Acetylesterase</fullName>
        <ecNumber evidence="1">3.1.1.6</ecNumber>
    </alternativeName>
    <alternativeName>
        <fullName evidence="9">Lung alpha/beta hydrolase 2</fullName>
        <shortName evidence="9">MmLABH2</shortName>
    </alternativeName>
    <alternativeName>
        <fullName evidence="1">Triacylglycerol lipase</fullName>
        <ecNumber evidence="1">3.1.1.79</ecNumber>
    </alternativeName>
</protein>
<dbReference type="EC" id="3.1.1.23" evidence="1"/>
<dbReference type="EC" id="3.1.1.6" evidence="1"/>
<dbReference type="EC" id="3.1.1.79" evidence="1"/>
<dbReference type="EMBL" id="AF201730">
    <property type="protein sequence ID" value="AAF17566.1"/>
    <property type="molecule type" value="mRNA"/>
</dbReference>
<dbReference type="EMBL" id="AF546701">
    <property type="protein sequence ID" value="AAQ12022.1"/>
    <property type="molecule type" value="mRNA"/>
</dbReference>
<dbReference type="EMBL" id="AK008690">
    <property type="protein sequence ID" value="BAB25836.1"/>
    <property type="molecule type" value="mRNA"/>
</dbReference>
<dbReference type="EMBL" id="AK139526">
    <property type="protein sequence ID" value="BAE24049.1"/>
    <property type="molecule type" value="mRNA"/>
</dbReference>
<dbReference type="EMBL" id="AK153642">
    <property type="protein sequence ID" value="BAE32131.1"/>
    <property type="molecule type" value="mRNA"/>
</dbReference>
<dbReference type="EMBL" id="BC027098">
    <property type="protein sequence ID" value="AAH27098.1"/>
    <property type="molecule type" value="mRNA"/>
</dbReference>
<dbReference type="EMBL" id="BC089477">
    <property type="protein sequence ID" value="AAH89477.1"/>
    <property type="molecule type" value="mRNA"/>
</dbReference>
<dbReference type="CCDS" id="CCDS21380.1"/>
<dbReference type="RefSeq" id="NP_061281.3">
    <property type="nucleotide sequence ID" value="NM_018811.6"/>
</dbReference>
<dbReference type="RefSeq" id="XP_036009150.1">
    <property type="nucleotide sequence ID" value="XM_036153257.1"/>
</dbReference>
<dbReference type="BioGRID" id="207683">
    <property type="interactions" value="1"/>
</dbReference>
<dbReference type="FunCoup" id="Q9QXM0">
    <property type="interactions" value="83"/>
</dbReference>
<dbReference type="STRING" id="10090.ENSMUSP00000038361"/>
<dbReference type="BindingDB" id="Q9QXM0"/>
<dbReference type="ESTHER" id="mouse-ABHD2">
    <property type="family name" value="abh_upf0017"/>
</dbReference>
<dbReference type="MEROPS" id="S33.A56"/>
<dbReference type="GlyCosmos" id="Q9QXM0">
    <property type="glycosylation" value="2 sites, No reported glycans"/>
</dbReference>
<dbReference type="GlyGen" id="Q9QXM0">
    <property type="glycosylation" value="2 sites"/>
</dbReference>
<dbReference type="iPTMnet" id="Q9QXM0"/>
<dbReference type="PhosphoSitePlus" id="Q9QXM0"/>
<dbReference type="PaxDb" id="10090-ENSMUSP00000038361"/>
<dbReference type="PeptideAtlas" id="Q9QXM0"/>
<dbReference type="ProteomicsDB" id="285826"/>
<dbReference type="Pumba" id="Q9QXM0"/>
<dbReference type="Antibodypedia" id="1104">
    <property type="antibodies" value="165 antibodies from 26 providers"/>
</dbReference>
<dbReference type="DNASU" id="54608"/>
<dbReference type="Ensembl" id="ENSMUST00000037315.13">
    <property type="protein sequence ID" value="ENSMUSP00000038361.7"/>
    <property type="gene ID" value="ENSMUSG00000039202.13"/>
</dbReference>
<dbReference type="GeneID" id="54608"/>
<dbReference type="KEGG" id="mmu:54608"/>
<dbReference type="UCSC" id="uc009hyc.1">
    <property type="organism name" value="mouse"/>
</dbReference>
<dbReference type="AGR" id="MGI:1914344"/>
<dbReference type="CTD" id="11057"/>
<dbReference type="MGI" id="MGI:1914344">
    <property type="gene designation" value="Abhd2"/>
</dbReference>
<dbReference type="VEuPathDB" id="HostDB:ENSMUSG00000039202"/>
<dbReference type="eggNOG" id="KOG1838">
    <property type="taxonomic scope" value="Eukaryota"/>
</dbReference>
<dbReference type="GeneTree" id="ENSGT00950000182902"/>
<dbReference type="HOGENOM" id="CLU_032487_5_0_1"/>
<dbReference type="InParanoid" id="Q9QXM0"/>
<dbReference type="OMA" id="HCTGEDV"/>
<dbReference type="OrthoDB" id="5954035at2759"/>
<dbReference type="PhylomeDB" id="Q9QXM0"/>
<dbReference type="TreeFam" id="TF313195"/>
<dbReference type="BioGRID-ORCS" id="54608">
    <property type="hits" value="1 hit in 78 CRISPR screens"/>
</dbReference>
<dbReference type="ChiTaRS" id="Abhd2">
    <property type="organism name" value="mouse"/>
</dbReference>
<dbReference type="PRO" id="PR:Q9QXM0"/>
<dbReference type="Proteomes" id="UP000000589">
    <property type="component" value="Chromosome 7"/>
</dbReference>
<dbReference type="RNAct" id="Q9QXM0">
    <property type="molecule type" value="protein"/>
</dbReference>
<dbReference type="Bgee" id="ENSMUSG00000039202">
    <property type="expression patterns" value="Expressed in pigmented layer of retina and 223 other cell types or tissues"/>
</dbReference>
<dbReference type="GO" id="GO:0002080">
    <property type="term" value="C:acrosomal membrane"/>
    <property type="evidence" value="ECO:0007669"/>
    <property type="project" value="UniProtKB-SubCell"/>
</dbReference>
<dbReference type="GO" id="GO:0001669">
    <property type="term" value="C:acrosomal vesicle"/>
    <property type="evidence" value="ECO:0000314"/>
    <property type="project" value="UniProtKB"/>
</dbReference>
<dbReference type="GO" id="GO:0036126">
    <property type="term" value="C:sperm flagellum"/>
    <property type="evidence" value="ECO:0007669"/>
    <property type="project" value="Ensembl"/>
</dbReference>
<dbReference type="GO" id="GO:0097524">
    <property type="term" value="C:sperm plasma membrane"/>
    <property type="evidence" value="ECO:0007669"/>
    <property type="project" value="Ensembl"/>
</dbReference>
<dbReference type="GO" id="GO:0008126">
    <property type="term" value="F:acetylesterase activity"/>
    <property type="evidence" value="ECO:0000250"/>
    <property type="project" value="UniProtKB"/>
</dbReference>
<dbReference type="GO" id="GO:0120516">
    <property type="term" value="F:diacylglycerol lipase activity"/>
    <property type="evidence" value="ECO:0000250"/>
    <property type="project" value="UniProtKB"/>
</dbReference>
<dbReference type="GO" id="GO:0042562">
    <property type="term" value="F:hormone binding"/>
    <property type="evidence" value="ECO:0000250"/>
    <property type="project" value="UniProtKB"/>
</dbReference>
<dbReference type="GO" id="GO:0047372">
    <property type="term" value="F:monoacylglycerol lipase activity"/>
    <property type="evidence" value="ECO:0000250"/>
    <property type="project" value="UniProtKB"/>
</dbReference>
<dbReference type="GO" id="GO:0003707">
    <property type="term" value="F:nuclear steroid receptor activity"/>
    <property type="evidence" value="ECO:0000250"/>
    <property type="project" value="UniProtKB"/>
</dbReference>
<dbReference type="GO" id="GO:0004806">
    <property type="term" value="F:triacylglycerol lipase activity"/>
    <property type="evidence" value="ECO:0007669"/>
    <property type="project" value="RHEA"/>
</dbReference>
<dbReference type="GO" id="GO:0007340">
    <property type="term" value="P:acrosome reaction"/>
    <property type="evidence" value="ECO:0000315"/>
    <property type="project" value="UniProtKB"/>
</dbReference>
<dbReference type="GO" id="GO:0046464">
    <property type="term" value="P:acylglycerol catabolic process"/>
    <property type="evidence" value="ECO:0000250"/>
    <property type="project" value="UniProtKB"/>
</dbReference>
<dbReference type="GO" id="GO:0014912">
    <property type="term" value="P:negative regulation of smooth muscle cell migration"/>
    <property type="evidence" value="ECO:0000315"/>
    <property type="project" value="MGI"/>
</dbReference>
<dbReference type="GO" id="GO:0032570">
    <property type="term" value="P:response to progesterone"/>
    <property type="evidence" value="ECO:0000250"/>
    <property type="project" value="UniProtKB"/>
</dbReference>
<dbReference type="GO" id="GO:0009611">
    <property type="term" value="P:response to wounding"/>
    <property type="evidence" value="ECO:0000315"/>
    <property type="project" value="MGI"/>
</dbReference>
<dbReference type="GO" id="GO:0014909">
    <property type="term" value="P:smooth muscle cell migration"/>
    <property type="evidence" value="ECO:0000315"/>
    <property type="project" value="MGI"/>
</dbReference>
<dbReference type="GO" id="GO:0048240">
    <property type="term" value="P:sperm capacitation"/>
    <property type="evidence" value="ECO:0007669"/>
    <property type="project" value="Ensembl"/>
</dbReference>
<dbReference type="GO" id="GO:0043401">
    <property type="term" value="P:steroid hormone receptor signaling pathway"/>
    <property type="evidence" value="ECO:0000250"/>
    <property type="project" value="UniProtKB"/>
</dbReference>
<dbReference type="FunFam" id="3.40.50.1820:FF:000053">
    <property type="entry name" value="Abhydrolase domain containing 2"/>
    <property type="match status" value="1"/>
</dbReference>
<dbReference type="Gene3D" id="3.40.50.1820">
    <property type="entry name" value="alpha/beta hydrolase"/>
    <property type="match status" value="1"/>
</dbReference>
<dbReference type="InterPro" id="IPR000073">
    <property type="entry name" value="AB_hydrolase_1"/>
</dbReference>
<dbReference type="InterPro" id="IPR000952">
    <property type="entry name" value="AB_hydrolase_4_CS"/>
</dbReference>
<dbReference type="InterPro" id="IPR050960">
    <property type="entry name" value="AB_hydrolase_4_sf"/>
</dbReference>
<dbReference type="InterPro" id="IPR029058">
    <property type="entry name" value="AB_hydrolase_fold"/>
</dbReference>
<dbReference type="InterPro" id="IPR012020">
    <property type="entry name" value="ABHD4"/>
</dbReference>
<dbReference type="PANTHER" id="PTHR10794">
    <property type="entry name" value="ABHYDROLASE DOMAIN-CONTAINING PROTEIN"/>
    <property type="match status" value="1"/>
</dbReference>
<dbReference type="PANTHER" id="PTHR10794:SF45">
    <property type="entry name" value="MONOACYLGLYCEROL LIPASE ABHD2"/>
    <property type="match status" value="1"/>
</dbReference>
<dbReference type="Pfam" id="PF00561">
    <property type="entry name" value="Abhydrolase_1"/>
    <property type="match status" value="1"/>
</dbReference>
<dbReference type="PIRSF" id="PIRSF005211">
    <property type="entry name" value="Ab_hydro_YheT"/>
    <property type="match status" value="1"/>
</dbReference>
<dbReference type="SUPFAM" id="SSF53474">
    <property type="entry name" value="alpha/beta-Hydrolases"/>
    <property type="match status" value="1"/>
</dbReference>
<dbReference type="PROSITE" id="PS01133">
    <property type="entry name" value="UPF0017"/>
    <property type="match status" value="1"/>
</dbReference>
<proteinExistence type="evidence at protein level"/>
<comment type="function">
    <text evidence="1 6 11">Progesterone-dependent acylglycerol lipase that catalyzes hydrolysis of endocannabinoid arachidonoylglycerol (AG) from cell membrane. Acts as a progesterone receptor: progesterone-binding activates the acylglycerol lipase activity, mediating degradation of 1-arachidonoylglycerol (1AG) and 2-arachidonoylglycerol (2AG) to glycerol and arachidonic acid (AA). Also displays an ester hydrolase activity against acetyl ester, butanoate ester and hexadecanoate ester. Plays a key role in sperm capacitation in response to progesterone by mediating degradation of 2AG, an inhibitor of the sperm calcium channel CatSper, leading to calcium influx via CatSper and sperm activation (By similarity). Involved in acrosomal reaction (Probable). May also play a role in smooth muscle cells migration (PubMed:15721306).</text>
</comment>
<comment type="catalytic activity">
    <reaction evidence="1">
        <text>Hydrolyzes glycerol monoesters of long-chain fatty acids.</text>
        <dbReference type="EC" id="3.1.1.23"/>
    </reaction>
</comment>
<comment type="catalytic activity">
    <reaction evidence="1">
        <text>an acetyl ester + H2O = an aliphatic alcohol + acetate + H(+)</text>
        <dbReference type="Rhea" id="RHEA:12957"/>
        <dbReference type="ChEBI" id="CHEBI:2571"/>
        <dbReference type="ChEBI" id="CHEBI:15377"/>
        <dbReference type="ChEBI" id="CHEBI:15378"/>
        <dbReference type="ChEBI" id="CHEBI:30089"/>
        <dbReference type="ChEBI" id="CHEBI:47622"/>
        <dbReference type="EC" id="3.1.1.6"/>
    </reaction>
    <physiologicalReaction direction="left-to-right" evidence="1">
        <dbReference type="Rhea" id="RHEA:12958"/>
    </physiologicalReaction>
</comment>
<comment type="catalytic activity">
    <reaction evidence="1">
        <text>a triacylglycerol + H2O = a diacylglycerol + a fatty acid + H(+)</text>
        <dbReference type="Rhea" id="RHEA:12044"/>
        <dbReference type="ChEBI" id="CHEBI:15377"/>
        <dbReference type="ChEBI" id="CHEBI:15378"/>
        <dbReference type="ChEBI" id="CHEBI:17855"/>
        <dbReference type="ChEBI" id="CHEBI:18035"/>
        <dbReference type="ChEBI" id="CHEBI:28868"/>
        <dbReference type="EC" id="3.1.1.79"/>
    </reaction>
    <physiologicalReaction direction="left-to-right" evidence="1">
        <dbReference type="Rhea" id="RHEA:12045"/>
    </physiologicalReaction>
</comment>
<comment type="catalytic activity">
    <reaction evidence="1">
        <text>2-(5Z,8Z,11Z,14Z-eicosatetraenoyl)-glycerol + H2O = glycerol + (5Z,8Z,11Z,14Z)-eicosatetraenoate + H(+)</text>
        <dbReference type="Rhea" id="RHEA:26132"/>
        <dbReference type="ChEBI" id="CHEBI:15377"/>
        <dbReference type="ChEBI" id="CHEBI:15378"/>
        <dbReference type="ChEBI" id="CHEBI:17754"/>
        <dbReference type="ChEBI" id="CHEBI:32395"/>
        <dbReference type="ChEBI" id="CHEBI:52392"/>
    </reaction>
    <physiologicalReaction direction="left-to-right" evidence="1">
        <dbReference type="Rhea" id="RHEA:26133"/>
    </physiologicalReaction>
</comment>
<comment type="catalytic activity">
    <reaction evidence="1">
        <text>a butanoate ester + H2O = an aliphatic alcohol + butanoate + H(+)</text>
        <dbReference type="Rhea" id="RHEA:47348"/>
        <dbReference type="ChEBI" id="CHEBI:2571"/>
        <dbReference type="ChEBI" id="CHEBI:15377"/>
        <dbReference type="ChEBI" id="CHEBI:15378"/>
        <dbReference type="ChEBI" id="CHEBI:17968"/>
        <dbReference type="ChEBI" id="CHEBI:50477"/>
    </reaction>
    <physiologicalReaction direction="left-to-right" evidence="1">
        <dbReference type="Rhea" id="RHEA:47349"/>
    </physiologicalReaction>
</comment>
<comment type="catalytic activity">
    <reaction evidence="1">
        <text>hexadecanoate ester + H2O = an aliphatic alcohol + hexadecanoate + H(+)</text>
        <dbReference type="Rhea" id="RHEA:47392"/>
        <dbReference type="ChEBI" id="CHEBI:2571"/>
        <dbReference type="ChEBI" id="CHEBI:7896"/>
        <dbReference type="ChEBI" id="CHEBI:15377"/>
        <dbReference type="ChEBI" id="CHEBI:15378"/>
        <dbReference type="ChEBI" id="CHEBI:25835"/>
    </reaction>
    <physiologicalReaction direction="left-to-right" evidence="1">
        <dbReference type="Rhea" id="RHEA:47393"/>
    </physiologicalReaction>
</comment>
<comment type="activity regulation">
    <text evidence="1">Acylglycerol lipase activity is activated upon binding to progesterone.</text>
</comment>
<comment type="subcellular location">
    <subcellularLocation>
        <location evidence="1">Cell membrane</location>
        <topology evidence="1">Single-pass type II membrane protein</topology>
    </subcellularLocation>
    <subcellularLocation>
        <location evidence="8">Cytoplasmic vesicle</location>
        <location evidence="8">Secretory vesicle</location>
        <location evidence="8">Acrosome membrane</location>
    </subcellularLocation>
    <text evidence="8">Absent from the sperm flagellum.</text>
</comment>
<comment type="tissue specificity">
    <text evidence="5 6">Widely expressed with higher expression in testis. Expressed by vascular smooth muscle cells, non vascular smooth muscle cells and heart.</text>
</comment>
<comment type="developmental stage">
    <text evidence="5 6">Detected in embryos from 7 dpc to 17 dpc. Weakly expressed in heart at 9.5 dpc. Expression is detected in endothelial cells of the dorsal aorta at 10.5 dpc and disappear at 12.5 dpc. Expression in smooth muscle cells is first detected at 11.5 dpc. Strongly expressed in vitelline vessels at 12.5 dpc. Expressed in all smooth muscle cells at 16.5 dpc.</text>
</comment>
<comment type="disruption phenotype">
    <text evidence="6 7">Neointimal hyperplasia (PubMed:15721306). In lungs, decreased level of phosphatidylcholine in the bronchoalveolar lavage is observed (PubMed:19250629). Mice develop spontaneous gradual progression of emphysema (PubMed:19250629).</text>
</comment>
<comment type="similarity">
    <text evidence="10">Belongs to the AB hydrolase superfamily. AB hydrolase 4 family.</text>
</comment>
<name>ABHD2_MOUSE</name>
<sequence>MNAMLETPELPAVFDGVKLAAVAAVLYVIVRCLNLKSPTAPPDLYFQDSGLSRFLLKSCPLLTKEYIPPLIWGKSGHIQTALYGKMGRVRSPHPYGHRKFITMSDGATSTFDLFEPLAEHCVGDDITMVICPGIANHSEKQYIRTFVDYAQKNGYRCAVLNHLGALPNIELTSPRMFTYGCTWEFGAMVNYIKRTYPQTQLVVVGFSLGGNIVCKYLGETQANQEKVLCCVSVCQGYSALRAQETFMQWDQCRRFYNFLMADNMKKIILSHRQALFGDHVKKPQSLEDTDLSRLYTATSLMQIDDNVMRKFHGYNSLKEYYEEESCMRYLHRIYVPLMLVNAADDPLVHESLLTIPKSLSEKRENVMFVLPLHGGHLGFFEGSVLFPEPLTWMDKLVVEYANAICQWERNKSQCSDTEQMEAELE</sequence>
<organism>
    <name type="scientific">Mus musculus</name>
    <name type="common">Mouse</name>
    <dbReference type="NCBI Taxonomy" id="10090"/>
    <lineage>
        <taxon>Eukaryota</taxon>
        <taxon>Metazoa</taxon>
        <taxon>Chordata</taxon>
        <taxon>Craniata</taxon>
        <taxon>Vertebrata</taxon>
        <taxon>Euteleostomi</taxon>
        <taxon>Mammalia</taxon>
        <taxon>Eutheria</taxon>
        <taxon>Euarchontoglires</taxon>
        <taxon>Glires</taxon>
        <taxon>Rodentia</taxon>
        <taxon>Myomorpha</taxon>
        <taxon>Muroidea</taxon>
        <taxon>Muridae</taxon>
        <taxon>Murinae</taxon>
        <taxon>Mus</taxon>
        <taxon>Mus</taxon>
    </lineage>
</organism>
<accession>Q9QXM0</accession>
<accession>Q3U5E8</accession>
<accession>Q5FWC6</accession>
<accession>Q9D7Y8</accession>
<keyword id="KW-1003">Cell membrane</keyword>
<keyword id="KW-0968">Cytoplasmic vesicle</keyword>
<keyword id="KW-0325">Glycoprotein</keyword>
<keyword id="KW-0378">Hydrolase</keyword>
<keyword id="KW-0442">Lipid degradation</keyword>
<keyword id="KW-0443">Lipid metabolism</keyword>
<keyword id="KW-0472">Membrane</keyword>
<keyword id="KW-1185">Reference proteome</keyword>
<keyword id="KW-0719">Serine esterase</keyword>
<keyword id="KW-0735">Signal-anchor</keyword>
<keyword id="KW-0812">Transmembrane</keyword>
<keyword id="KW-1133">Transmembrane helix</keyword>
<gene>
    <name type="primary">Abhd2</name>
    <name evidence="9" type="synonym">Labh-2</name>
    <name evidence="9" type="synonym">Labh2</name>
</gene>
<evidence type="ECO:0000250" key="1">
    <source>
        <dbReference type="UniProtKB" id="P08910"/>
    </source>
</evidence>
<evidence type="ECO:0000250" key="2">
    <source>
        <dbReference type="UniProtKB" id="Q86WA6"/>
    </source>
</evidence>
<evidence type="ECO:0000255" key="3"/>
<evidence type="ECO:0000255" key="4">
    <source>
        <dbReference type="PROSITE-ProRule" id="PRU00498"/>
    </source>
</evidence>
<evidence type="ECO:0000269" key="5">
    <source>
    </source>
</evidence>
<evidence type="ECO:0000269" key="6">
    <source>
    </source>
</evidence>
<evidence type="ECO:0000269" key="7">
    <source>
    </source>
</evidence>
<evidence type="ECO:0000269" key="8">
    <source>
    </source>
</evidence>
<evidence type="ECO:0000303" key="9">
    <source>
    </source>
</evidence>
<evidence type="ECO:0000305" key="10"/>
<evidence type="ECO:0000305" key="11">
    <source>
    </source>
</evidence>
<feature type="chain" id="PRO_0000280782" description="Monoacylglycerol lipase ABHD2">
    <location>
        <begin position="1"/>
        <end position="425"/>
    </location>
</feature>
<feature type="topological domain" description="Cytoplasmic" evidence="10">
    <location>
        <begin position="1"/>
        <end position="9"/>
    </location>
</feature>
<feature type="transmembrane region" description="Helical; Signal-anchor for type II membrane protein" evidence="3">
    <location>
        <begin position="10"/>
        <end position="30"/>
    </location>
</feature>
<feature type="topological domain" description="Extracellular" evidence="10">
    <location>
        <begin position="31"/>
        <end position="425"/>
    </location>
</feature>
<feature type="domain" description="AB hydrolase-1" evidence="3">
    <location>
        <begin position="128"/>
        <end position="382"/>
    </location>
</feature>
<feature type="active site" description="Nucleophile" evidence="2">
    <location>
        <position position="207"/>
    </location>
</feature>
<feature type="active site" description="Charge relay system" evidence="2">
    <location>
        <position position="345"/>
    </location>
</feature>
<feature type="active site" description="Charge relay system" evidence="2">
    <location>
        <position position="376"/>
    </location>
</feature>
<feature type="glycosylation site" description="N-linked (GlcNAc...) asparagine" evidence="4">
    <location>
        <position position="136"/>
    </location>
</feature>
<feature type="glycosylation site" description="N-linked (GlcNAc...) asparagine" evidence="4">
    <location>
        <position position="410"/>
    </location>
</feature>
<feature type="sequence conflict" description="In Ref. 3; BAB25836." evidence="10" ref="3">
    <original>A</original>
    <variation>V</variation>
    <location>
        <position position="21"/>
    </location>
</feature>
<feature type="sequence conflict" description="In Ref. 4; AAH89477." evidence="10" ref="4">
    <original>T</original>
    <variation>A</variation>
    <location>
        <position position="63"/>
    </location>
</feature>
<feature type="sequence conflict" description="In Ref. 3; BAE32131." evidence="10" ref="3">
    <original>M</original>
    <variation>L</variation>
    <location>
        <position position="338"/>
    </location>
</feature>
<reference key="1">
    <citation type="journal article" date="2002" name="Biochem. Biophys. Res. Commun.">
        <title>Cloning and tissue distribution of three murine alpha/beta hydrolase fold protein cDNAs.</title>
        <authorList>
            <person name="Edgar A.J."/>
            <person name="Polak J.M."/>
        </authorList>
    </citation>
    <scope>NUCLEOTIDE SEQUENCE [MRNA]</scope>
    <scope>TISSUE SPECIFICITY</scope>
    <scope>DEVELOPMENTAL STAGE</scope>
    <source>
        <tissue>Lung</tissue>
    </source>
</reference>
<reference key="2">
    <citation type="submission" date="2002-09" db="EMBL/GenBank/DDBJ databases">
        <title>Cloning of an androgen-regulated a/b hydrolase.</title>
        <authorList>
            <person name="Utleg A."/>
            <person name="White J."/>
            <person name="Lin B."/>
        </authorList>
    </citation>
    <scope>NUCLEOTIDE SEQUENCE [MRNA]</scope>
</reference>
<reference key="3">
    <citation type="journal article" date="2005" name="Science">
        <title>The transcriptional landscape of the mammalian genome.</title>
        <authorList>
            <person name="Carninci P."/>
            <person name="Kasukawa T."/>
            <person name="Katayama S."/>
            <person name="Gough J."/>
            <person name="Frith M.C."/>
            <person name="Maeda N."/>
            <person name="Oyama R."/>
            <person name="Ravasi T."/>
            <person name="Lenhard B."/>
            <person name="Wells C."/>
            <person name="Kodzius R."/>
            <person name="Shimokawa K."/>
            <person name="Bajic V.B."/>
            <person name="Brenner S.E."/>
            <person name="Batalov S."/>
            <person name="Forrest A.R."/>
            <person name="Zavolan M."/>
            <person name="Davis M.J."/>
            <person name="Wilming L.G."/>
            <person name="Aidinis V."/>
            <person name="Allen J.E."/>
            <person name="Ambesi-Impiombato A."/>
            <person name="Apweiler R."/>
            <person name="Aturaliya R.N."/>
            <person name="Bailey T.L."/>
            <person name="Bansal M."/>
            <person name="Baxter L."/>
            <person name="Beisel K.W."/>
            <person name="Bersano T."/>
            <person name="Bono H."/>
            <person name="Chalk A.M."/>
            <person name="Chiu K.P."/>
            <person name="Choudhary V."/>
            <person name="Christoffels A."/>
            <person name="Clutterbuck D.R."/>
            <person name="Crowe M.L."/>
            <person name="Dalla E."/>
            <person name="Dalrymple B.P."/>
            <person name="de Bono B."/>
            <person name="Della Gatta G."/>
            <person name="di Bernardo D."/>
            <person name="Down T."/>
            <person name="Engstrom P."/>
            <person name="Fagiolini M."/>
            <person name="Faulkner G."/>
            <person name="Fletcher C.F."/>
            <person name="Fukushima T."/>
            <person name="Furuno M."/>
            <person name="Futaki S."/>
            <person name="Gariboldi M."/>
            <person name="Georgii-Hemming P."/>
            <person name="Gingeras T.R."/>
            <person name="Gojobori T."/>
            <person name="Green R.E."/>
            <person name="Gustincich S."/>
            <person name="Harbers M."/>
            <person name="Hayashi Y."/>
            <person name="Hensch T.K."/>
            <person name="Hirokawa N."/>
            <person name="Hill D."/>
            <person name="Huminiecki L."/>
            <person name="Iacono M."/>
            <person name="Ikeo K."/>
            <person name="Iwama A."/>
            <person name="Ishikawa T."/>
            <person name="Jakt M."/>
            <person name="Kanapin A."/>
            <person name="Katoh M."/>
            <person name="Kawasawa Y."/>
            <person name="Kelso J."/>
            <person name="Kitamura H."/>
            <person name="Kitano H."/>
            <person name="Kollias G."/>
            <person name="Krishnan S.P."/>
            <person name="Kruger A."/>
            <person name="Kummerfeld S.K."/>
            <person name="Kurochkin I.V."/>
            <person name="Lareau L.F."/>
            <person name="Lazarevic D."/>
            <person name="Lipovich L."/>
            <person name="Liu J."/>
            <person name="Liuni S."/>
            <person name="McWilliam S."/>
            <person name="Madan Babu M."/>
            <person name="Madera M."/>
            <person name="Marchionni L."/>
            <person name="Matsuda H."/>
            <person name="Matsuzawa S."/>
            <person name="Miki H."/>
            <person name="Mignone F."/>
            <person name="Miyake S."/>
            <person name="Morris K."/>
            <person name="Mottagui-Tabar S."/>
            <person name="Mulder N."/>
            <person name="Nakano N."/>
            <person name="Nakauchi H."/>
            <person name="Ng P."/>
            <person name="Nilsson R."/>
            <person name="Nishiguchi S."/>
            <person name="Nishikawa S."/>
            <person name="Nori F."/>
            <person name="Ohara O."/>
            <person name="Okazaki Y."/>
            <person name="Orlando V."/>
            <person name="Pang K.C."/>
            <person name="Pavan W.J."/>
            <person name="Pavesi G."/>
            <person name="Pesole G."/>
            <person name="Petrovsky N."/>
            <person name="Piazza S."/>
            <person name="Reed J."/>
            <person name="Reid J.F."/>
            <person name="Ring B.Z."/>
            <person name="Ringwald M."/>
            <person name="Rost B."/>
            <person name="Ruan Y."/>
            <person name="Salzberg S.L."/>
            <person name="Sandelin A."/>
            <person name="Schneider C."/>
            <person name="Schoenbach C."/>
            <person name="Sekiguchi K."/>
            <person name="Semple C.A."/>
            <person name="Seno S."/>
            <person name="Sessa L."/>
            <person name="Sheng Y."/>
            <person name="Shibata Y."/>
            <person name="Shimada H."/>
            <person name="Shimada K."/>
            <person name="Silva D."/>
            <person name="Sinclair B."/>
            <person name="Sperling S."/>
            <person name="Stupka E."/>
            <person name="Sugiura K."/>
            <person name="Sultana R."/>
            <person name="Takenaka Y."/>
            <person name="Taki K."/>
            <person name="Tammoja K."/>
            <person name="Tan S.L."/>
            <person name="Tang S."/>
            <person name="Taylor M.S."/>
            <person name="Tegner J."/>
            <person name="Teichmann S.A."/>
            <person name="Ueda H.R."/>
            <person name="van Nimwegen E."/>
            <person name="Verardo R."/>
            <person name="Wei C.L."/>
            <person name="Yagi K."/>
            <person name="Yamanishi H."/>
            <person name="Zabarovsky E."/>
            <person name="Zhu S."/>
            <person name="Zimmer A."/>
            <person name="Hide W."/>
            <person name="Bult C."/>
            <person name="Grimmond S.M."/>
            <person name="Teasdale R.D."/>
            <person name="Liu E.T."/>
            <person name="Brusic V."/>
            <person name="Quackenbush J."/>
            <person name="Wahlestedt C."/>
            <person name="Mattick J.S."/>
            <person name="Hume D.A."/>
            <person name="Kai C."/>
            <person name="Sasaki D."/>
            <person name="Tomaru Y."/>
            <person name="Fukuda S."/>
            <person name="Kanamori-Katayama M."/>
            <person name="Suzuki M."/>
            <person name="Aoki J."/>
            <person name="Arakawa T."/>
            <person name="Iida J."/>
            <person name="Imamura K."/>
            <person name="Itoh M."/>
            <person name="Kato T."/>
            <person name="Kawaji H."/>
            <person name="Kawagashira N."/>
            <person name="Kawashima T."/>
            <person name="Kojima M."/>
            <person name="Kondo S."/>
            <person name="Konno H."/>
            <person name="Nakano K."/>
            <person name="Ninomiya N."/>
            <person name="Nishio T."/>
            <person name="Okada M."/>
            <person name="Plessy C."/>
            <person name="Shibata K."/>
            <person name="Shiraki T."/>
            <person name="Suzuki S."/>
            <person name="Tagami M."/>
            <person name="Waki K."/>
            <person name="Watahiki A."/>
            <person name="Okamura-Oho Y."/>
            <person name="Suzuki H."/>
            <person name="Kawai J."/>
            <person name="Hayashizaki Y."/>
        </authorList>
    </citation>
    <scope>NUCLEOTIDE SEQUENCE [LARGE SCALE MRNA]</scope>
    <source>
        <strain>C57BL/6J</strain>
        <tissue>Egg</tissue>
        <tissue>Stomach</tissue>
        <tissue>Thymus</tissue>
    </source>
</reference>
<reference key="4">
    <citation type="journal article" date="2004" name="Genome Res.">
        <title>The status, quality, and expansion of the NIH full-length cDNA project: the Mammalian Gene Collection (MGC).</title>
        <authorList>
            <consortium name="The MGC Project Team"/>
        </authorList>
    </citation>
    <scope>NUCLEOTIDE SEQUENCE [LARGE SCALE MRNA]</scope>
    <source>
        <strain>FVB/N</strain>
        <tissue>Mammary tumor</tissue>
        <tissue>Testis</tissue>
    </source>
</reference>
<reference key="5">
    <citation type="journal article" date="2005" name="Biochem. Biophys. Res. Commun.">
        <title>Increase of smooth muscle cell migration and of intimal hyperplasia in mice lacking the alpha/beta hydrolase domain containing 2 gene.</title>
        <authorList>
            <person name="Miyata K."/>
            <person name="Oike Y."/>
            <person name="Hoshii T."/>
            <person name="Maekawa H."/>
            <person name="Ogawa H."/>
            <person name="Suda T."/>
            <person name="Araki K."/>
            <person name="Yamamura K."/>
        </authorList>
    </citation>
    <scope>FUNCTION</scope>
    <scope>TISSUE SPECIFICITY</scope>
    <scope>DEVELOPMENTAL STAGE</scope>
    <scope>DISRUPTION PHENOTYPE</scope>
</reference>
<reference key="6">
    <citation type="journal article" date="2009" name="Biochem. Biophys. Res. Commun.">
        <title>Age-related pulmonary emphysema in mice lacking alpha/beta hydrolase domain containing 2 gene.</title>
        <authorList>
            <person name="Jin S."/>
            <person name="Zhao G."/>
            <person name="Li Z."/>
            <person name="Nishimoto Y."/>
            <person name="Isohama Y."/>
            <person name="Shen J."/>
            <person name="Ito T."/>
            <person name="Takeya M."/>
            <person name="Araki K."/>
            <person name="He P."/>
            <person name="Yamamura K."/>
        </authorList>
    </citation>
    <scope>DISRUPTION PHENOTYPE</scope>
</reference>
<reference key="7">
    <citation type="journal article" date="2010" name="Cell">
        <title>A tissue-specific atlas of mouse protein phosphorylation and expression.</title>
        <authorList>
            <person name="Huttlin E.L."/>
            <person name="Jedrychowski M.P."/>
            <person name="Elias J.E."/>
            <person name="Goswami T."/>
            <person name="Rad R."/>
            <person name="Beausoleil S.A."/>
            <person name="Villen J."/>
            <person name="Haas W."/>
            <person name="Sowa M.E."/>
            <person name="Gygi S.P."/>
        </authorList>
    </citation>
    <scope>IDENTIFICATION BY MASS SPECTROMETRY [LARGE SCALE ANALYSIS]</scope>
    <source>
        <tissue>Liver</tissue>
        <tissue>Pancreas</tissue>
    </source>
</reference>
<reference key="8">
    <citation type="journal article" date="2016" name="Science">
        <title>Unconventional endocannabinoid signaling governs sperm activation via sex hormone progesterone.</title>
        <authorList>
            <person name="Miller M.R."/>
            <person name="Mannowetz N."/>
            <person name="Iavarone A.T."/>
            <person name="Safavi R."/>
            <person name="Gracheva E.O."/>
            <person name="Smith J.F."/>
            <person name="Hill R.Z."/>
            <person name="Bautista D.M."/>
            <person name="Kirichok Y."/>
            <person name="Lishko P.V."/>
        </authorList>
    </citation>
    <scope>FUNCTION</scope>
    <scope>SUBCELLULAR LOCATION</scope>
</reference>